<accession>Q0AGM0</accession>
<comment type="function">
    <text evidence="1">Involved in the biosynthesis of branched-chain amino acids (BCAA). Catalyzes an alkyl-migration followed by a ketol-acid reduction of (S)-2-acetolactate (S2AL) to yield (R)-2,3-dihydroxy-isovalerate. In the isomerase reaction, S2AL is rearranged via a Mg-dependent methyl migration to produce 3-hydroxy-3-methyl-2-ketobutyrate (HMKB). In the reductase reaction, this 2-ketoacid undergoes a metal-dependent reduction by NADPH to yield (R)-2,3-dihydroxy-isovalerate.</text>
</comment>
<comment type="catalytic activity">
    <reaction evidence="1">
        <text>(2R)-2,3-dihydroxy-3-methylbutanoate + NADP(+) = (2S)-2-acetolactate + NADPH + H(+)</text>
        <dbReference type="Rhea" id="RHEA:22068"/>
        <dbReference type="ChEBI" id="CHEBI:15378"/>
        <dbReference type="ChEBI" id="CHEBI:49072"/>
        <dbReference type="ChEBI" id="CHEBI:57783"/>
        <dbReference type="ChEBI" id="CHEBI:58349"/>
        <dbReference type="ChEBI" id="CHEBI:58476"/>
        <dbReference type="EC" id="1.1.1.86"/>
    </reaction>
</comment>
<comment type="catalytic activity">
    <reaction evidence="1">
        <text>(2R,3R)-2,3-dihydroxy-3-methylpentanoate + NADP(+) = (S)-2-ethyl-2-hydroxy-3-oxobutanoate + NADPH + H(+)</text>
        <dbReference type="Rhea" id="RHEA:13493"/>
        <dbReference type="ChEBI" id="CHEBI:15378"/>
        <dbReference type="ChEBI" id="CHEBI:49256"/>
        <dbReference type="ChEBI" id="CHEBI:49258"/>
        <dbReference type="ChEBI" id="CHEBI:57783"/>
        <dbReference type="ChEBI" id="CHEBI:58349"/>
        <dbReference type="EC" id="1.1.1.86"/>
    </reaction>
</comment>
<comment type="cofactor">
    <cofactor evidence="1">
        <name>Mg(2+)</name>
        <dbReference type="ChEBI" id="CHEBI:18420"/>
    </cofactor>
    <text evidence="1">Binds 2 magnesium ions per subunit.</text>
</comment>
<comment type="pathway">
    <text evidence="1">Amino-acid biosynthesis; L-isoleucine biosynthesis; L-isoleucine from 2-oxobutanoate: step 2/4.</text>
</comment>
<comment type="pathway">
    <text evidence="1">Amino-acid biosynthesis; L-valine biosynthesis; L-valine from pyruvate: step 2/4.</text>
</comment>
<comment type="similarity">
    <text evidence="1">Belongs to the ketol-acid reductoisomerase family.</text>
</comment>
<feature type="chain" id="PRO_1000050547" description="Ketol-acid reductoisomerase (NADP(+))">
    <location>
        <begin position="1"/>
        <end position="338"/>
    </location>
</feature>
<feature type="domain" description="KARI N-terminal Rossmann" evidence="2">
    <location>
        <begin position="1"/>
        <end position="181"/>
    </location>
</feature>
<feature type="domain" description="KARI C-terminal knotted" evidence="3">
    <location>
        <begin position="182"/>
        <end position="327"/>
    </location>
</feature>
<feature type="active site" evidence="1">
    <location>
        <position position="107"/>
    </location>
</feature>
<feature type="binding site" evidence="1">
    <location>
        <begin position="24"/>
        <end position="27"/>
    </location>
    <ligand>
        <name>NADP(+)</name>
        <dbReference type="ChEBI" id="CHEBI:58349"/>
    </ligand>
</feature>
<feature type="binding site" evidence="1">
    <location>
        <position position="47"/>
    </location>
    <ligand>
        <name>NADP(+)</name>
        <dbReference type="ChEBI" id="CHEBI:58349"/>
    </ligand>
</feature>
<feature type="binding site" evidence="1">
    <location>
        <position position="52"/>
    </location>
    <ligand>
        <name>NADP(+)</name>
        <dbReference type="ChEBI" id="CHEBI:58349"/>
    </ligand>
</feature>
<feature type="binding site" evidence="1">
    <location>
        <position position="133"/>
    </location>
    <ligand>
        <name>NADP(+)</name>
        <dbReference type="ChEBI" id="CHEBI:58349"/>
    </ligand>
</feature>
<feature type="binding site" evidence="1">
    <location>
        <position position="190"/>
    </location>
    <ligand>
        <name>Mg(2+)</name>
        <dbReference type="ChEBI" id="CHEBI:18420"/>
        <label>1</label>
    </ligand>
</feature>
<feature type="binding site" evidence="1">
    <location>
        <position position="190"/>
    </location>
    <ligand>
        <name>Mg(2+)</name>
        <dbReference type="ChEBI" id="CHEBI:18420"/>
        <label>2</label>
    </ligand>
</feature>
<feature type="binding site" evidence="1">
    <location>
        <position position="194"/>
    </location>
    <ligand>
        <name>Mg(2+)</name>
        <dbReference type="ChEBI" id="CHEBI:18420"/>
        <label>1</label>
    </ligand>
</feature>
<feature type="binding site" evidence="1">
    <location>
        <position position="226"/>
    </location>
    <ligand>
        <name>Mg(2+)</name>
        <dbReference type="ChEBI" id="CHEBI:18420"/>
        <label>2</label>
    </ligand>
</feature>
<feature type="binding site" evidence="1">
    <location>
        <position position="230"/>
    </location>
    <ligand>
        <name>Mg(2+)</name>
        <dbReference type="ChEBI" id="CHEBI:18420"/>
        <label>2</label>
    </ligand>
</feature>
<feature type="binding site" evidence="1">
    <location>
        <position position="251"/>
    </location>
    <ligand>
        <name>substrate</name>
    </ligand>
</feature>
<evidence type="ECO:0000255" key="1">
    <source>
        <dbReference type="HAMAP-Rule" id="MF_00435"/>
    </source>
</evidence>
<evidence type="ECO:0000255" key="2">
    <source>
        <dbReference type="PROSITE-ProRule" id="PRU01197"/>
    </source>
</evidence>
<evidence type="ECO:0000255" key="3">
    <source>
        <dbReference type="PROSITE-ProRule" id="PRU01198"/>
    </source>
</evidence>
<keyword id="KW-0028">Amino-acid biosynthesis</keyword>
<keyword id="KW-0100">Branched-chain amino acid biosynthesis</keyword>
<keyword id="KW-0460">Magnesium</keyword>
<keyword id="KW-0479">Metal-binding</keyword>
<keyword id="KW-0521">NADP</keyword>
<keyword id="KW-0560">Oxidoreductase</keyword>
<organism>
    <name type="scientific">Nitrosomonas eutropha (strain DSM 101675 / C91 / Nm57)</name>
    <dbReference type="NCBI Taxonomy" id="335283"/>
    <lineage>
        <taxon>Bacteria</taxon>
        <taxon>Pseudomonadati</taxon>
        <taxon>Pseudomonadota</taxon>
        <taxon>Betaproteobacteria</taxon>
        <taxon>Nitrosomonadales</taxon>
        <taxon>Nitrosomonadaceae</taxon>
        <taxon>Nitrosomonas</taxon>
    </lineage>
</organism>
<name>ILVC_NITEC</name>
<gene>
    <name evidence="1" type="primary">ilvC</name>
    <name type="ordered locus">Neut_1260</name>
</gene>
<dbReference type="EC" id="1.1.1.86" evidence="1"/>
<dbReference type="EMBL" id="CP000450">
    <property type="protein sequence ID" value="ABI59512.1"/>
    <property type="molecule type" value="Genomic_DNA"/>
</dbReference>
<dbReference type="RefSeq" id="WP_011634331.1">
    <property type="nucleotide sequence ID" value="NC_008344.1"/>
</dbReference>
<dbReference type="SMR" id="Q0AGM0"/>
<dbReference type="STRING" id="335283.Neut_1260"/>
<dbReference type="KEGG" id="net:Neut_1260"/>
<dbReference type="eggNOG" id="COG0059">
    <property type="taxonomic scope" value="Bacteria"/>
</dbReference>
<dbReference type="HOGENOM" id="CLU_033821_0_1_4"/>
<dbReference type="OrthoDB" id="9804088at2"/>
<dbReference type="UniPathway" id="UPA00047">
    <property type="reaction ID" value="UER00056"/>
</dbReference>
<dbReference type="UniPathway" id="UPA00049">
    <property type="reaction ID" value="UER00060"/>
</dbReference>
<dbReference type="Proteomes" id="UP000001966">
    <property type="component" value="Chromosome"/>
</dbReference>
<dbReference type="GO" id="GO:0005829">
    <property type="term" value="C:cytosol"/>
    <property type="evidence" value="ECO:0007669"/>
    <property type="project" value="TreeGrafter"/>
</dbReference>
<dbReference type="GO" id="GO:0004455">
    <property type="term" value="F:ketol-acid reductoisomerase activity"/>
    <property type="evidence" value="ECO:0007669"/>
    <property type="project" value="UniProtKB-UniRule"/>
</dbReference>
<dbReference type="GO" id="GO:0000287">
    <property type="term" value="F:magnesium ion binding"/>
    <property type="evidence" value="ECO:0007669"/>
    <property type="project" value="UniProtKB-UniRule"/>
</dbReference>
<dbReference type="GO" id="GO:0050661">
    <property type="term" value="F:NADP binding"/>
    <property type="evidence" value="ECO:0007669"/>
    <property type="project" value="InterPro"/>
</dbReference>
<dbReference type="GO" id="GO:0009097">
    <property type="term" value="P:isoleucine biosynthetic process"/>
    <property type="evidence" value="ECO:0007669"/>
    <property type="project" value="UniProtKB-UniRule"/>
</dbReference>
<dbReference type="GO" id="GO:0009099">
    <property type="term" value="P:L-valine biosynthetic process"/>
    <property type="evidence" value="ECO:0007669"/>
    <property type="project" value="UniProtKB-UniRule"/>
</dbReference>
<dbReference type="FunFam" id="3.40.50.720:FF:000023">
    <property type="entry name" value="Ketol-acid reductoisomerase (NADP(+))"/>
    <property type="match status" value="1"/>
</dbReference>
<dbReference type="Gene3D" id="6.10.240.10">
    <property type="match status" value="1"/>
</dbReference>
<dbReference type="Gene3D" id="3.40.50.720">
    <property type="entry name" value="NAD(P)-binding Rossmann-like Domain"/>
    <property type="match status" value="1"/>
</dbReference>
<dbReference type="HAMAP" id="MF_00435">
    <property type="entry name" value="IlvC"/>
    <property type="match status" value="1"/>
</dbReference>
<dbReference type="InterPro" id="IPR008927">
    <property type="entry name" value="6-PGluconate_DH-like_C_sf"/>
</dbReference>
<dbReference type="InterPro" id="IPR013023">
    <property type="entry name" value="KARI"/>
</dbReference>
<dbReference type="InterPro" id="IPR000506">
    <property type="entry name" value="KARI_C"/>
</dbReference>
<dbReference type="InterPro" id="IPR013116">
    <property type="entry name" value="KARI_N"/>
</dbReference>
<dbReference type="InterPro" id="IPR014359">
    <property type="entry name" value="KARI_prok"/>
</dbReference>
<dbReference type="InterPro" id="IPR036291">
    <property type="entry name" value="NAD(P)-bd_dom_sf"/>
</dbReference>
<dbReference type="NCBIfam" id="TIGR00465">
    <property type="entry name" value="ilvC"/>
    <property type="match status" value="1"/>
</dbReference>
<dbReference type="NCBIfam" id="NF004017">
    <property type="entry name" value="PRK05479.1"/>
    <property type="match status" value="1"/>
</dbReference>
<dbReference type="NCBIfam" id="NF009940">
    <property type="entry name" value="PRK13403.1"/>
    <property type="match status" value="1"/>
</dbReference>
<dbReference type="PANTHER" id="PTHR21371">
    <property type="entry name" value="KETOL-ACID REDUCTOISOMERASE, MITOCHONDRIAL"/>
    <property type="match status" value="1"/>
</dbReference>
<dbReference type="PANTHER" id="PTHR21371:SF1">
    <property type="entry name" value="KETOL-ACID REDUCTOISOMERASE, MITOCHONDRIAL"/>
    <property type="match status" value="1"/>
</dbReference>
<dbReference type="Pfam" id="PF01450">
    <property type="entry name" value="KARI_C"/>
    <property type="match status" value="1"/>
</dbReference>
<dbReference type="Pfam" id="PF07991">
    <property type="entry name" value="KARI_N"/>
    <property type="match status" value="1"/>
</dbReference>
<dbReference type="PIRSF" id="PIRSF000116">
    <property type="entry name" value="IlvC_gammaproteo"/>
    <property type="match status" value="1"/>
</dbReference>
<dbReference type="SUPFAM" id="SSF48179">
    <property type="entry name" value="6-phosphogluconate dehydrogenase C-terminal domain-like"/>
    <property type="match status" value="1"/>
</dbReference>
<dbReference type="SUPFAM" id="SSF51735">
    <property type="entry name" value="NAD(P)-binding Rossmann-fold domains"/>
    <property type="match status" value="1"/>
</dbReference>
<dbReference type="PROSITE" id="PS51851">
    <property type="entry name" value="KARI_C"/>
    <property type="match status" value="1"/>
</dbReference>
<dbReference type="PROSITE" id="PS51850">
    <property type="entry name" value="KARI_N"/>
    <property type="match status" value="1"/>
</dbReference>
<reference key="1">
    <citation type="journal article" date="2007" name="Environ. Microbiol.">
        <title>Whole-genome analysis of the ammonia-oxidizing bacterium, Nitrosomonas eutropha C91: implications for niche adaptation.</title>
        <authorList>
            <person name="Stein L.Y."/>
            <person name="Arp D.J."/>
            <person name="Berube P.M."/>
            <person name="Chain P.S."/>
            <person name="Hauser L."/>
            <person name="Jetten M.S."/>
            <person name="Klotz M.G."/>
            <person name="Larimer F.W."/>
            <person name="Norton J.M."/>
            <person name="Op den Camp H.J.M."/>
            <person name="Shin M."/>
            <person name="Wei X."/>
        </authorList>
    </citation>
    <scope>NUCLEOTIDE SEQUENCE [LARGE SCALE GENOMIC DNA]</scope>
    <source>
        <strain>DSM 101675 / C91 / Nm57</strain>
    </source>
</reference>
<proteinExistence type="inferred from homology"/>
<sequence length="338" mass="37145">MKVYYDKDADLSLIKKKKIAIIGYGSQGHAHANNLNDSGVEVIIGLRKDGASWDKAKKAGLTVKEVSEAVKDADIVMLLLPDEQMASIYQTEVEPALKKNATLAFAHGFNIHYGQIIPREDLDIIMIAPKGPGHLVRSTYIQGGGVPSLIAVHQDKSGKARDLALSYAAANGGTRGGVIETTFKEETETDLFGEQVVLCGGLTSLIQAGFETLVEAGYAPEMAYFECLHEVKLIVDLIYEGGIANMRYSVSNNAEYGDVSRGPRIITEATRNEMRKILREIQTGEYAREFILEHRAGAPVLKSSRRLASEHLIETVGSRLRDMMPWIKKNKLVDQAKN</sequence>
<protein>
    <recommendedName>
        <fullName evidence="1">Ketol-acid reductoisomerase (NADP(+))</fullName>
        <shortName evidence="1">KARI</shortName>
        <ecNumber evidence="1">1.1.1.86</ecNumber>
    </recommendedName>
    <alternativeName>
        <fullName evidence="1">Acetohydroxy-acid isomeroreductase</fullName>
        <shortName evidence="1">AHIR</shortName>
    </alternativeName>
    <alternativeName>
        <fullName evidence="1">Alpha-keto-beta-hydroxylacyl reductoisomerase</fullName>
    </alternativeName>
    <alternativeName>
        <fullName evidence="1">Ketol-acid reductoisomerase type 1</fullName>
    </alternativeName>
    <alternativeName>
        <fullName evidence="1">Ketol-acid reductoisomerase type I</fullName>
    </alternativeName>
</protein>